<sequence length="149" mass="16317">MICLLQRVTHGSVSVSNETIGQISSGLVVLCGFQPHDTTESLEKMAHKLLHYRVFSDEDDKMNLNLQQAFSGKGGDLLLVPQFTLAADTKKGLRPSFHTSASPDLAHNLFNEFVALITLKFGPPQTGKFGANMQVSLINDGPVTFWLET</sequence>
<organism>
    <name type="scientific">Hydrogenovibrio crunogenus (strain DSM 25203 / XCL-2)</name>
    <name type="common">Thiomicrospira crunogena</name>
    <dbReference type="NCBI Taxonomy" id="317025"/>
    <lineage>
        <taxon>Bacteria</taxon>
        <taxon>Pseudomonadati</taxon>
        <taxon>Pseudomonadota</taxon>
        <taxon>Gammaproteobacteria</taxon>
        <taxon>Thiotrichales</taxon>
        <taxon>Piscirickettsiaceae</taxon>
        <taxon>Hydrogenovibrio</taxon>
    </lineage>
</organism>
<name>DTD_HYDCU</name>
<gene>
    <name evidence="1" type="primary">dtd</name>
    <name type="ordered locus">Tcr_0167</name>
</gene>
<protein>
    <recommendedName>
        <fullName evidence="1">D-aminoacyl-tRNA deacylase</fullName>
        <shortName evidence="1">DTD</shortName>
        <ecNumber evidence="1">3.1.1.96</ecNumber>
    </recommendedName>
    <alternativeName>
        <fullName evidence="1">Gly-tRNA(Ala) deacylase</fullName>
    </alternativeName>
</protein>
<accession>Q31JB0</accession>
<evidence type="ECO:0000255" key="1">
    <source>
        <dbReference type="HAMAP-Rule" id="MF_00518"/>
    </source>
</evidence>
<comment type="function">
    <text evidence="1">An aminoacyl-tRNA editing enzyme that deacylates mischarged D-aminoacyl-tRNAs. Also deacylates mischarged glycyl-tRNA(Ala), protecting cells against glycine mischarging by AlaRS. Acts via tRNA-based rather than protein-based catalysis; rejects L-amino acids rather than detecting D-amino acids in the active site. By recycling D-aminoacyl-tRNA to D-amino acids and free tRNA molecules, this enzyme counteracts the toxicity associated with the formation of D-aminoacyl-tRNA entities in vivo and helps enforce protein L-homochirality.</text>
</comment>
<comment type="catalytic activity">
    <reaction evidence="1">
        <text>glycyl-tRNA(Ala) + H2O = tRNA(Ala) + glycine + H(+)</text>
        <dbReference type="Rhea" id="RHEA:53744"/>
        <dbReference type="Rhea" id="RHEA-COMP:9657"/>
        <dbReference type="Rhea" id="RHEA-COMP:13640"/>
        <dbReference type="ChEBI" id="CHEBI:15377"/>
        <dbReference type="ChEBI" id="CHEBI:15378"/>
        <dbReference type="ChEBI" id="CHEBI:57305"/>
        <dbReference type="ChEBI" id="CHEBI:78442"/>
        <dbReference type="ChEBI" id="CHEBI:78522"/>
        <dbReference type="EC" id="3.1.1.96"/>
    </reaction>
</comment>
<comment type="catalytic activity">
    <reaction evidence="1">
        <text>a D-aminoacyl-tRNA + H2O = a tRNA + a D-alpha-amino acid + H(+)</text>
        <dbReference type="Rhea" id="RHEA:13953"/>
        <dbReference type="Rhea" id="RHEA-COMP:10123"/>
        <dbReference type="Rhea" id="RHEA-COMP:10124"/>
        <dbReference type="ChEBI" id="CHEBI:15377"/>
        <dbReference type="ChEBI" id="CHEBI:15378"/>
        <dbReference type="ChEBI" id="CHEBI:59871"/>
        <dbReference type="ChEBI" id="CHEBI:78442"/>
        <dbReference type="ChEBI" id="CHEBI:79333"/>
        <dbReference type="EC" id="3.1.1.96"/>
    </reaction>
</comment>
<comment type="subunit">
    <text evidence="1">Homodimer.</text>
</comment>
<comment type="subcellular location">
    <subcellularLocation>
        <location evidence="1">Cytoplasm</location>
    </subcellularLocation>
</comment>
<comment type="domain">
    <text evidence="1">A Gly-cisPro motif from one monomer fits into the active site of the other monomer to allow specific chiral rejection of L-amino acids.</text>
</comment>
<comment type="similarity">
    <text evidence="1">Belongs to the DTD family.</text>
</comment>
<proteinExistence type="inferred from homology"/>
<reference key="1">
    <citation type="journal article" date="2006" name="PLoS Biol.">
        <title>The genome of deep-sea vent chemolithoautotroph Thiomicrospira crunogena XCL-2.</title>
        <authorList>
            <person name="Scott K.M."/>
            <person name="Sievert S.M."/>
            <person name="Abril F.N."/>
            <person name="Ball L.A."/>
            <person name="Barrett C.J."/>
            <person name="Blake R.A."/>
            <person name="Boller A.J."/>
            <person name="Chain P.S.G."/>
            <person name="Clark J.A."/>
            <person name="Davis C.R."/>
            <person name="Detter C."/>
            <person name="Do K.F."/>
            <person name="Dobrinski K.P."/>
            <person name="Faza B.I."/>
            <person name="Fitzpatrick K.A."/>
            <person name="Freyermuth S.K."/>
            <person name="Harmer T.L."/>
            <person name="Hauser L.J."/>
            <person name="Huegler M."/>
            <person name="Kerfeld C.A."/>
            <person name="Klotz M.G."/>
            <person name="Kong W.W."/>
            <person name="Land M."/>
            <person name="Lapidus A."/>
            <person name="Larimer F.W."/>
            <person name="Longo D.L."/>
            <person name="Lucas S."/>
            <person name="Malfatti S.A."/>
            <person name="Massey S.E."/>
            <person name="Martin D.D."/>
            <person name="McCuddin Z."/>
            <person name="Meyer F."/>
            <person name="Moore J.L."/>
            <person name="Ocampo L.H. Jr."/>
            <person name="Paul J.H."/>
            <person name="Paulsen I.T."/>
            <person name="Reep D.K."/>
            <person name="Ren Q."/>
            <person name="Ross R.L."/>
            <person name="Sato P.Y."/>
            <person name="Thomas P."/>
            <person name="Tinkham L.E."/>
            <person name="Zeruth G.T."/>
        </authorList>
    </citation>
    <scope>NUCLEOTIDE SEQUENCE [LARGE SCALE GENOMIC DNA]</scope>
    <source>
        <strain>DSM 25203 / XCL-2</strain>
    </source>
</reference>
<dbReference type="EC" id="3.1.1.96" evidence="1"/>
<dbReference type="EMBL" id="CP000109">
    <property type="protein sequence ID" value="ABB40763.1"/>
    <property type="molecule type" value="Genomic_DNA"/>
</dbReference>
<dbReference type="SMR" id="Q31JB0"/>
<dbReference type="STRING" id="317025.Tcr_0167"/>
<dbReference type="KEGG" id="tcx:Tcr_0167"/>
<dbReference type="eggNOG" id="COG1490">
    <property type="taxonomic scope" value="Bacteria"/>
</dbReference>
<dbReference type="HOGENOM" id="CLU_076901_1_1_6"/>
<dbReference type="OrthoDB" id="9801395at2"/>
<dbReference type="GO" id="GO:0005737">
    <property type="term" value="C:cytoplasm"/>
    <property type="evidence" value="ECO:0007669"/>
    <property type="project" value="UniProtKB-SubCell"/>
</dbReference>
<dbReference type="GO" id="GO:0051500">
    <property type="term" value="F:D-tyrosyl-tRNA(Tyr) deacylase activity"/>
    <property type="evidence" value="ECO:0007669"/>
    <property type="project" value="TreeGrafter"/>
</dbReference>
<dbReference type="GO" id="GO:0106026">
    <property type="term" value="F:Gly-tRNA(Ala) deacylase activity"/>
    <property type="evidence" value="ECO:0007669"/>
    <property type="project" value="UniProtKB-UniRule"/>
</dbReference>
<dbReference type="GO" id="GO:0043908">
    <property type="term" value="F:Ser(Gly)-tRNA(Ala) hydrolase activity"/>
    <property type="evidence" value="ECO:0007669"/>
    <property type="project" value="UniProtKB-UniRule"/>
</dbReference>
<dbReference type="GO" id="GO:0000049">
    <property type="term" value="F:tRNA binding"/>
    <property type="evidence" value="ECO:0007669"/>
    <property type="project" value="UniProtKB-UniRule"/>
</dbReference>
<dbReference type="GO" id="GO:0019478">
    <property type="term" value="P:D-amino acid catabolic process"/>
    <property type="evidence" value="ECO:0007669"/>
    <property type="project" value="UniProtKB-UniRule"/>
</dbReference>
<dbReference type="FunFam" id="3.50.80.10:FF:000001">
    <property type="entry name" value="D-aminoacyl-tRNA deacylase"/>
    <property type="match status" value="1"/>
</dbReference>
<dbReference type="Gene3D" id="3.50.80.10">
    <property type="entry name" value="D-tyrosyl-tRNA(Tyr) deacylase"/>
    <property type="match status" value="1"/>
</dbReference>
<dbReference type="HAMAP" id="MF_00518">
    <property type="entry name" value="Deacylase_Dtd"/>
    <property type="match status" value="1"/>
</dbReference>
<dbReference type="InterPro" id="IPR003732">
    <property type="entry name" value="Daa-tRNA_deacyls_DTD"/>
</dbReference>
<dbReference type="InterPro" id="IPR023509">
    <property type="entry name" value="DTD-like_sf"/>
</dbReference>
<dbReference type="NCBIfam" id="TIGR00256">
    <property type="entry name" value="D-aminoacyl-tRNA deacylase"/>
    <property type="match status" value="1"/>
</dbReference>
<dbReference type="PANTHER" id="PTHR10472:SF5">
    <property type="entry name" value="D-AMINOACYL-TRNA DEACYLASE 1"/>
    <property type="match status" value="1"/>
</dbReference>
<dbReference type="PANTHER" id="PTHR10472">
    <property type="entry name" value="D-TYROSYL-TRNA TYR DEACYLASE"/>
    <property type="match status" value="1"/>
</dbReference>
<dbReference type="Pfam" id="PF02580">
    <property type="entry name" value="Tyr_Deacylase"/>
    <property type="match status" value="1"/>
</dbReference>
<dbReference type="SUPFAM" id="SSF69500">
    <property type="entry name" value="DTD-like"/>
    <property type="match status" value="1"/>
</dbReference>
<keyword id="KW-0963">Cytoplasm</keyword>
<keyword id="KW-0378">Hydrolase</keyword>
<keyword id="KW-0694">RNA-binding</keyword>
<keyword id="KW-0820">tRNA-binding</keyword>
<feature type="chain" id="PRO_1000127591" description="D-aminoacyl-tRNA deacylase">
    <location>
        <begin position="1"/>
        <end position="149"/>
    </location>
</feature>
<feature type="short sequence motif" description="Gly-cisPro motif, important for rejection of L-amino acids" evidence="1">
    <location>
        <begin position="141"/>
        <end position="142"/>
    </location>
</feature>